<proteinExistence type="inferred from homology"/>
<dbReference type="EMBL" id="CP001033">
    <property type="protein sequence ID" value="ACB90991.1"/>
    <property type="molecule type" value="Genomic_DNA"/>
</dbReference>
<dbReference type="RefSeq" id="WP_000161861.1">
    <property type="nucleotide sequence ID" value="NC_010582.1"/>
</dbReference>
<dbReference type="SMR" id="B2ISB6"/>
<dbReference type="KEGG" id="spw:SPCG_1739"/>
<dbReference type="HOGENOM" id="CLU_030313_4_0_9"/>
<dbReference type="GO" id="GO:0005886">
    <property type="term" value="C:plasma membrane"/>
    <property type="evidence" value="ECO:0007669"/>
    <property type="project" value="UniProtKB-SubCell"/>
</dbReference>
<dbReference type="GO" id="GO:0065002">
    <property type="term" value="P:intracellular protein transmembrane transport"/>
    <property type="evidence" value="ECO:0007669"/>
    <property type="project" value="UniProtKB-UniRule"/>
</dbReference>
<dbReference type="GO" id="GO:0006605">
    <property type="term" value="P:protein targeting"/>
    <property type="evidence" value="ECO:0007669"/>
    <property type="project" value="UniProtKB-UniRule"/>
</dbReference>
<dbReference type="Gene3D" id="1.10.3370.10">
    <property type="entry name" value="SecY subunit domain"/>
    <property type="match status" value="1"/>
</dbReference>
<dbReference type="HAMAP" id="MF_01466">
    <property type="entry name" value="SecY2"/>
    <property type="match status" value="1"/>
</dbReference>
<dbReference type="InterPro" id="IPR002208">
    <property type="entry name" value="SecY/SEC61-alpha"/>
</dbReference>
<dbReference type="InterPro" id="IPR014269">
    <property type="entry name" value="SecY2"/>
</dbReference>
<dbReference type="InterPro" id="IPR023201">
    <property type="entry name" value="SecY_dom_sf"/>
</dbReference>
<dbReference type="NCBIfam" id="TIGR02920">
    <property type="entry name" value="acc_sec_Y2"/>
    <property type="match status" value="1"/>
</dbReference>
<dbReference type="NCBIfam" id="NF009082">
    <property type="entry name" value="PRK12417.1"/>
    <property type="match status" value="1"/>
</dbReference>
<dbReference type="PANTHER" id="PTHR10906">
    <property type="entry name" value="SECY/SEC61-ALPHA FAMILY MEMBER"/>
    <property type="match status" value="1"/>
</dbReference>
<dbReference type="Pfam" id="PF00344">
    <property type="entry name" value="SecY"/>
    <property type="match status" value="1"/>
</dbReference>
<dbReference type="PIRSF" id="PIRSF004557">
    <property type="entry name" value="SecY"/>
    <property type="match status" value="1"/>
</dbReference>
<dbReference type="PRINTS" id="PR00303">
    <property type="entry name" value="SECYTRNLCASE"/>
</dbReference>
<dbReference type="SUPFAM" id="SSF103491">
    <property type="entry name" value="Preprotein translocase SecY subunit"/>
    <property type="match status" value="1"/>
</dbReference>
<protein>
    <recommendedName>
        <fullName evidence="1">Accessory Sec system protein translocase subunit SecY2</fullName>
    </recommendedName>
</protein>
<evidence type="ECO:0000255" key="1">
    <source>
        <dbReference type="HAMAP-Rule" id="MF_01466"/>
    </source>
</evidence>
<reference key="1">
    <citation type="journal article" date="2009" name="BMC Genomics">
        <title>Genome evolution driven by host adaptations results in a more virulent and antimicrobial-resistant Streptococcus pneumoniae serotype 14.</title>
        <authorList>
            <person name="Ding F."/>
            <person name="Tang P."/>
            <person name="Hsu M.-H."/>
            <person name="Cui P."/>
            <person name="Hu S."/>
            <person name="Yu J."/>
            <person name="Chiu C.-H."/>
        </authorList>
    </citation>
    <scope>NUCLEOTIDE SEQUENCE [LARGE SCALE GENOMIC DNA]</scope>
    <source>
        <strain>CGSP14</strain>
    </source>
</reference>
<name>SECY2_STRPS</name>
<gene>
    <name evidence="1" type="primary">secY2</name>
    <name type="ordered locus">SPCG_1739</name>
</gene>
<keyword id="KW-1003">Cell membrane</keyword>
<keyword id="KW-0472">Membrane</keyword>
<keyword id="KW-0653">Protein transport</keyword>
<keyword id="KW-0811">Translocation</keyword>
<keyword id="KW-0812">Transmembrane</keyword>
<keyword id="KW-1133">Transmembrane helix</keyword>
<keyword id="KW-0813">Transport</keyword>
<accession>B2ISB6</accession>
<sequence>MTKIYSSIAVKKGLFTLFLLFIYVLGSRIILPFVDLNTKDFLGGSTAYLAFSAALTGGNLRSLSIFSVGLSPWMSAMILWQMFSYSKKLGLSSTAIEIQDRRRMYLTLMIAVIQSLAVSLRLPVQSSYSAILVVLMNTILLIAGTFFLVWLSDLNASMGIGGSIVILLSSMVLNIPQDVLETFQTVHIPTGIIVLLALLTLVFSYLLALMYRARYLVPVNKIGLHNRFKRYSYLEIMLNPAGGMPYMYVMSFLSVPAYLFILLGFIFPNHSGLAALSKEFMIGKPLWVYVYISVLFLFSIIFAFVTMNGEEIADRMKKSGEYIYGIYPGADTSLFINRLVLRFSVIGGLFNVVMAGGPMLFVLFDEKLLRLAMIPGLFMMFGGMIFTIRDEVKALRLNETYKPLI</sequence>
<organism>
    <name type="scientific">Streptococcus pneumoniae (strain CGSP14)</name>
    <dbReference type="NCBI Taxonomy" id="516950"/>
    <lineage>
        <taxon>Bacteria</taxon>
        <taxon>Bacillati</taxon>
        <taxon>Bacillota</taxon>
        <taxon>Bacilli</taxon>
        <taxon>Lactobacillales</taxon>
        <taxon>Streptococcaceae</taxon>
        <taxon>Streptococcus</taxon>
    </lineage>
</organism>
<comment type="function">
    <text evidence="1">Part of the accessory SecA2/SecY2 system specifically required for export of possible cell wall proteins. The central subunit of a protein translocation channel.</text>
</comment>
<comment type="subunit">
    <text evidence="1">Component of the accessory SecA2/SecY2 protein translocase complex required to export cell wall proteins. May form heterotrimers with SecE and SecG subunits.</text>
</comment>
<comment type="subcellular location">
    <subcellularLocation>
        <location evidence="1">Cell membrane</location>
        <topology evidence="1">Multi-pass membrane protein</topology>
    </subcellularLocation>
</comment>
<comment type="similarity">
    <text evidence="1">Belongs to the SecY/SEC61-alpha family. SecY2 subfamily.</text>
</comment>
<feature type="chain" id="PRO_0000414879" description="Accessory Sec system protein translocase subunit SecY2">
    <location>
        <begin position="1"/>
        <end position="405"/>
    </location>
</feature>
<feature type="transmembrane region" description="Helical" evidence="1">
    <location>
        <begin position="14"/>
        <end position="34"/>
    </location>
</feature>
<feature type="transmembrane region" description="Helical" evidence="1">
    <location>
        <begin position="63"/>
        <end position="83"/>
    </location>
</feature>
<feature type="transmembrane region" description="Helical" evidence="1">
    <location>
        <begin position="104"/>
        <end position="124"/>
    </location>
</feature>
<feature type="transmembrane region" description="Helical" evidence="1">
    <location>
        <begin position="131"/>
        <end position="151"/>
    </location>
</feature>
<feature type="transmembrane region" description="Helical" evidence="1">
    <location>
        <begin position="156"/>
        <end position="176"/>
    </location>
</feature>
<feature type="transmembrane region" description="Helical" evidence="1">
    <location>
        <begin position="191"/>
        <end position="211"/>
    </location>
</feature>
<feature type="transmembrane region" description="Helical" evidence="1">
    <location>
        <begin position="247"/>
        <end position="267"/>
    </location>
</feature>
<feature type="transmembrane region" description="Helical" evidence="1">
    <location>
        <begin position="285"/>
        <end position="305"/>
    </location>
</feature>
<feature type="transmembrane region" description="Helical" evidence="1">
    <location>
        <begin position="343"/>
        <end position="363"/>
    </location>
</feature>
<feature type="transmembrane region" description="Helical" evidence="1">
    <location>
        <begin position="368"/>
        <end position="388"/>
    </location>
</feature>